<organism>
    <name type="scientific">Macrovipera lebetina transmediterranea</name>
    <name type="common">Blunt-nosed viper</name>
    <name type="synonym">Vipera lebetina transmediterranea</name>
    <dbReference type="NCBI Taxonomy" id="384075"/>
    <lineage>
        <taxon>Eukaryota</taxon>
        <taxon>Metazoa</taxon>
        <taxon>Chordata</taxon>
        <taxon>Craniata</taxon>
        <taxon>Vertebrata</taxon>
        <taxon>Euteleostomi</taxon>
        <taxon>Lepidosauria</taxon>
        <taxon>Squamata</taxon>
        <taxon>Bifurcata</taxon>
        <taxon>Unidentata</taxon>
        <taxon>Episquamata</taxon>
        <taxon>Toxicofera</taxon>
        <taxon>Serpentes</taxon>
        <taxon>Colubroidea</taxon>
        <taxon>Viperidae</taxon>
        <taxon>Viperinae</taxon>
        <taxon>Macrovipera</taxon>
        <taxon>Macrovipera lebetinus</taxon>
    </lineage>
</organism>
<sequence>MSSGGLLLLLGLLTLWAELTPVSSQDRPKFCYLPADPAECNAYMPRFYYDSASNKCKEFIYGGCRGNANNFKNRAECRHTCVASRKGIQPRIASN</sequence>
<name>VKT_MACLN</name>
<protein>
    <recommendedName>
        <fullName evidence="4">Kunitz-type serine protease inhibitor PIVL</fullName>
    </recommendedName>
</protein>
<dbReference type="EMBL" id="HE800183">
    <property type="protein sequence ID" value="CCH15044.1"/>
    <property type="molecule type" value="mRNA"/>
</dbReference>
<dbReference type="SMR" id="I2G9B4"/>
<dbReference type="MEROPS" id="I02.062"/>
<dbReference type="GO" id="GO:0005615">
    <property type="term" value="C:extracellular space"/>
    <property type="evidence" value="ECO:0007669"/>
    <property type="project" value="TreeGrafter"/>
</dbReference>
<dbReference type="GO" id="GO:0004867">
    <property type="term" value="F:serine-type endopeptidase inhibitor activity"/>
    <property type="evidence" value="ECO:0007669"/>
    <property type="project" value="UniProtKB-KW"/>
</dbReference>
<dbReference type="CDD" id="cd22608">
    <property type="entry name" value="Kunitz_PPTI-like"/>
    <property type="match status" value="1"/>
</dbReference>
<dbReference type="FunFam" id="4.10.410.10:FF:000021">
    <property type="entry name" value="Serine protease inhibitor, putative"/>
    <property type="match status" value="1"/>
</dbReference>
<dbReference type="Gene3D" id="4.10.410.10">
    <property type="entry name" value="Pancreatic trypsin inhibitor Kunitz domain"/>
    <property type="match status" value="1"/>
</dbReference>
<dbReference type="InterPro" id="IPR002223">
    <property type="entry name" value="Kunitz_BPTI"/>
</dbReference>
<dbReference type="InterPro" id="IPR036880">
    <property type="entry name" value="Kunitz_BPTI_sf"/>
</dbReference>
<dbReference type="InterPro" id="IPR020901">
    <property type="entry name" value="Prtase_inh_Kunz-CS"/>
</dbReference>
<dbReference type="InterPro" id="IPR050098">
    <property type="entry name" value="TFPI/VKTCI-like"/>
</dbReference>
<dbReference type="PANTHER" id="PTHR10083:SF374">
    <property type="entry name" value="BPTI_KUNITZ INHIBITOR DOMAIN-CONTAINING PROTEIN"/>
    <property type="match status" value="1"/>
</dbReference>
<dbReference type="PANTHER" id="PTHR10083">
    <property type="entry name" value="KUNITZ-TYPE PROTEASE INHIBITOR-RELATED"/>
    <property type="match status" value="1"/>
</dbReference>
<dbReference type="Pfam" id="PF00014">
    <property type="entry name" value="Kunitz_BPTI"/>
    <property type="match status" value="1"/>
</dbReference>
<dbReference type="PRINTS" id="PR00759">
    <property type="entry name" value="BASICPTASE"/>
</dbReference>
<dbReference type="SMART" id="SM00131">
    <property type="entry name" value="KU"/>
    <property type="match status" value="1"/>
</dbReference>
<dbReference type="SUPFAM" id="SSF57362">
    <property type="entry name" value="BPTI-like"/>
    <property type="match status" value="1"/>
</dbReference>
<dbReference type="PROSITE" id="PS00280">
    <property type="entry name" value="BPTI_KUNITZ_1"/>
    <property type="match status" value="1"/>
</dbReference>
<dbReference type="PROSITE" id="PS50279">
    <property type="entry name" value="BPTI_KUNITZ_2"/>
    <property type="match status" value="1"/>
</dbReference>
<feature type="signal peptide" evidence="3">
    <location>
        <begin position="1"/>
        <end position="24"/>
    </location>
</feature>
<feature type="chain" id="PRO_0000422086" description="Kunitz-type serine protease inhibitor PIVL" evidence="3">
    <location>
        <begin position="25"/>
        <end position="91"/>
    </location>
</feature>
<feature type="propeptide" id="PRO_0000422087" evidence="3">
    <location>
        <begin position="92"/>
        <end position="95"/>
    </location>
</feature>
<feature type="domain" description="BPTI/Kunitz inhibitor" evidence="2">
    <location>
        <begin position="31"/>
        <end position="81"/>
    </location>
</feature>
<feature type="region of interest" description="Responsible for the anti-cancer effect">
    <location>
        <begin position="65"/>
        <end position="67"/>
    </location>
</feature>
<feature type="site" description="Reactive bond" evidence="1">
    <location>
        <begin position="41"/>
        <end position="42"/>
    </location>
</feature>
<feature type="modified residue" description="Pyrrolidone carboxylic acid" evidence="3">
    <location>
        <position position="25"/>
    </location>
</feature>
<feature type="disulfide bond" evidence="2">
    <location>
        <begin position="31"/>
        <end position="81"/>
    </location>
</feature>
<feature type="disulfide bond" evidence="2">
    <location>
        <begin position="40"/>
        <end position="64"/>
    </location>
</feature>
<feature type="disulfide bond" evidence="2">
    <location>
        <begin position="56"/>
        <end position="77"/>
    </location>
</feature>
<feature type="sequence variant">
    <original>N</original>
    <variation>S</variation>
    <location>
        <position position="67"/>
    </location>
</feature>
<accession>I2G9B4</accession>
<reference key="1">
    <citation type="journal article" date="2013" name="Matrix Biol.">
        <title>PIVL, a new serine protease inhibitor from Macrovipera lebetina transmediterranea venom, impairs motility of human glioblastoma cells.</title>
        <authorList>
            <person name="Morjen M."/>
            <person name="Kallech-Ziri O."/>
            <person name="Bazaa A."/>
            <person name="Othman H."/>
            <person name="Mabrouk K."/>
            <person name="Zouari-Kessentini R."/>
            <person name="Sanz L."/>
            <person name="Calvete J.J."/>
            <person name="Srairi-Abid N."/>
            <person name="El Ayeb M."/>
            <person name="Luis J."/>
            <person name="Marrakchi N."/>
        </authorList>
    </citation>
    <scope>NUCLEOTIDE SEQUENCE [MRNA]</scope>
    <scope>FUNCTION</scope>
    <scope>SUBUNIT</scope>
    <scope>PYROGLUTAMATE FORMATION AT GLN-25</scope>
    <scope>MASS SPECTROMETRY</scope>
    <scope>SUBCELLULAR LOCATION</scope>
    <source>
        <tissue>Venom</tissue>
        <tissue>Venom gland</tissue>
    </source>
</reference>
<proteinExistence type="evidence at protein level"/>
<comment type="function">
    <text evidence="3">Serine protease inhibitor that inhibits trypsin. Exhibits an anti-tumor effect and displays integrin inhibitory activity without being cytotoxic. Is able to dose-dependently inhibit the adhesion, migration and invasion of human glioblastoma U87 cells. Also impairs the function of alpha-v/beta-3 (ITGAV/ITGB3) and to a lesser extent, the activity of alpha-v/beta-6 (ITGAV/ITGB6), alpha-v/beta-5 (ITGAV/ITGB5), alpha-1/beta-1 (ITGA1/ITGB1) and alpha-5/beta-1 (ITGA5/ITGB1) integrins.</text>
</comment>
<comment type="subunit">
    <text evidence="3">Monomer.</text>
</comment>
<comment type="subcellular location">
    <subcellularLocation>
        <location evidence="3">Secreted</location>
    </subcellularLocation>
</comment>
<comment type="tissue specificity">
    <text evidence="6">Expressed by the venom gland.</text>
</comment>
<comment type="mass spectrometry">
    <text>Average mass.</text>
</comment>
<comment type="miscellaneous">
    <text evidence="6">Negative results: does not inhibit chymotrypsin.</text>
</comment>
<comment type="miscellaneous">
    <text evidence="6">Negative results: when intracerebroventricularly injected into mice, does not cause any toxic symptoms until a dose of 2 ug.</text>
</comment>
<comment type="similarity">
    <text evidence="5">Belongs to the venom Kunitz-type family.</text>
</comment>
<evidence type="ECO:0000250" key="1"/>
<evidence type="ECO:0000255" key="2">
    <source>
        <dbReference type="PROSITE-ProRule" id="PRU00031"/>
    </source>
</evidence>
<evidence type="ECO:0000269" key="3">
    <source>
    </source>
</evidence>
<evidence type="ECO:0000303" key="4">
    <source>
    </source>
</evidence>
<evidence type="ECO:0000305" key="5"/>
<evidence type="ECO:0000305" key="6">
    <source>
    </source>
</evidence>
<keyword id="KW-1015">Disulfide bond</keyword>
<keyword id="KW-0646">Protease inhibitor</keyword>
<keyword id="KW-0873">Pyrrolidone carboxylic acid</keyword>
<keyword id="KW-0964">Secreted</keyword>
<keyword id="KW-0722">Serine protease inhibitor</keyword>
<keyword id="KW-0732">Signal</keyword>